<comment type="function">
    <text evidence="1">Cleaves a wide range of dipeptides and tripeptides, but does not display activity against larger peptides. May have a role in the survival of F.nucleatum in the subgingival environment of the mouth.</text>
</comment>
<comment type="catalytic activity">
    <reaction>
        <text>Release of the N-terminal residue from a tripeptide.</text>
        <dbReference type="EC" id="3.4.11.4"/>
    </reaction>
</comment>
<comment type="cofactor">
    <cofactor evidence="1">
        <name>Zn(2+)</name>
        <dbReference type="ChEBI" id="CHEBI:29105"/>
    </cofactor>
    <cofactor evidence="1">
        <name>Co(2+)</name>
        <dbReference type="ChEBI" id="CHEBI:48828"/>
    </cofactor>
    <text evidence="1">Binds 2 Zn(2+) or Co(2+) ions per subunit.</text>
</comment>
<comment type="activity regulation">
    <text evidence="1">Inhibited by the chelating agents EDTA and 1,10-phenanthroline, by bestatin and amastatin, p-hydroxymercuribenzoate and some divalent cations at high concentration.</text>
</comment>
<comment type="biophysicochemical properties">
    <kinetics>
        <KM evidence="1">0.66 mM for dipeptide Leu-Ala</KM>
        <KM evidence="1">4 mM for tripeptide Leu-Gly-Gly</KM>
        <Vmax evidence="1">0.12 umol/min/mg enzyme with Leu-Ala as substrate</Vmax>
        <Vmax evidence="1">0.09 umol/min/mg enzyme with Leu-Gly-Gly as substrate</Vmax>
    </kinetics>
    <phDependence>
        <text evidence="1">Optimum pH is 7.5-8.</text>
    </phDependence>
</comment>
<comment type="subcellular location">
    <subcellularLocation>
        <location evidence="1">Cell envelope</location>
    </subcellularLocation>
    <text>Cell envelope associated.</text>
</comment>
<comment type="similarity">
    <text evidence="2">Belongs to the peptidase M20B family.</text>
</comment>
<keyword id="KW-0031">Aminopeptidase</keyword>
<keyword id="KW-0170">Cobalt</keyword>
<keyword id="KW-0903">Direct protein sequencing</keyword>
<keyword id="KW-0378">Hydrolase</keyword>
<keyword id="KW-0479">Metal-binding</keyword>
<keyword id="KW-0482">Metalloprotease</keyword>
<keyword id="KW-0645">Protease</keyword>
<keyword id="KW-0862">Zinc</keyword>
<protein>
    <recommendedName>
        <fullName>Peptidase T</fullName>
        <ecNumber>3.4.11.4</ecNumber>
    </recommendedName>
    <alternativeName>
        <fullName>Aminotripeptidase</fullName>
        <shortName>Tripeptidase</shortName>
    </alternativeName>
    <alternativeName>
        <fullName>Tripeptide aminopeptidase</fullName>
    </alternativeName>
</protein>
<proteinExistence type="evidence at protein level"/>
<gene>
    <name type="primary">pepT</name>
</gene>
<organism>
    <name type="scientific">Fusobacterium nucleatum subsp. polymorphum</name>
    <name type="common">Fusobacterium polymorphum</name>
    <dbReference type="NCBI Taxonomy" id="76857"/>
    <lineage>
        <taxon>Bacteria</taxon>
        <taxon>Fusobacteriati</taxon>
        <taxon>Fusobacteriota</taxon>
        <taxon>Fusobacteriia</taxon>
        <taxon>Fusobacteriales</taxon>
        <taxon>Fusobacteriaceae</taxon>
        <taxon>Fusobacterium</taxon>
    </lineage>
</organism>
<evidence type="ECO:0000269" key="1">
    <source>
    </source>
</evidence>
<evidence type="ECO:0000305" key="2"/>
<sequence>MDXKXYVDLKERFLRYVKFN</sequence>
<name>PEPT_FUSNP</name>
<accession>P81207</accession>
<dbReference type="EC" id="3.4.11.4"/>
<dbReference type="STRING" id="76857.RO02_02560"/>
<dbReference type="GO" id="GO:0030313">
    <property type="term" value="C:cell envelope"/>
    <property type="evidence" value="ECO:0007669"/>
    <property type="project" value="UniProtKB-SubCell"/>
</dbReference>
<dbReference type="GO" id="GO:0046872">
    <property type="term" value="F:metal ion binding"/>
    <property type="evidence" value="ECO:0007669"/>
    <property type="project" value="UniProtKB-KW"/>
</dbReference>
<dbReference type="GO" id="GO:0008237">
    <property type="term" value="F:metallopeptidase activity"/>
    <property type="evidence" value="ECO:0007669"/>
    <property type="project" value="UniProtKB-KW"/>
</dbReference>
<dbReference type="GO" id="GO:0045148">
    <property type="term" value="F:tripeptide aminopeptidase activity"/>
    <property type="evidence" value="ECO:0007669"/>
    <property type="project" value="UniProtKB-EC"/>
</dbReference>
<dbReference type="GO" id="GO:0006508">
    <property type="term" value="P:proteolysis"/>
    <property type="evidence" value="ECO:0007669"/>
    <property type="project" value="UniProtKB-KW"/>
</dbReference>
<reference key="1">
    <citation type="journal article" date="1998" name="Microbiology">
        <title>An aminopeptidase nutritionally important to Fusobacterium nucleatum.</title>
        <authorList>
            <person name="Rogers A.H."/>
            <person name="Gunadi A."/>
            <person name="Gully N.J."/>
            <person name="Zilm P.S."/>
        </authorList>
    </citation>
    <scope>PROTEIN SEQUENCE</scope>
    <scope>FUNCTION</scope>
    <scope>SUBSTRATE SPECIFICITY</scope>
    <scope>COFACTOR</scope>
    <scope>ACTIVITY REGULATION</scope>
    <scope>SUBCELLULAR LOCATION</scope>
    <scope>BIOPHYSICOCHEMICAL PROPERTIES</scope>
    <source>
        <strain>ATCC 10953 / DSM 20482 / CCUG 9126 / JCM 12990 / NCTC 10562 / 555A</strain>
    </source>
</reference>
<feature type="chain" id="PRO_0000185296" description="Peptidase T">
    <location>
        <begin position="1"/>
        <end position="20" status="greater than"/>
    </location>
</feature>
<feature type="non-terminal residue">
    <location>
        <position position="20"/>
    </location>
</feature>